<keyword id="KW-0012">Acyltransferase</keyword>
<keyword id="KW-1003">Cell membrane</keyword>
<keyword id="KW-0472">Membrane</keyword>
<keyword id="KW-0808">Transferase</keyword>
<keyword id="KW-0812">Transmembrane</keyword>
<keyword id="KW-1133">Transmembrane helix</keyword>
<protein>
    <recommendedName>
        <fullName>Putative O-acetyltransferase SAS0844</fullName>
        <ecNumber>2.3.1.-</ecNumber>
    </recommendedName>
</protein>
<proteinExistence type="inferred from homology"/>
<name>OTRF1_STAAS</name>
<accession>Q6GAV2</accession>
<comment type="subcellular location">
    <subcellularLocation>
        <location evidence="3">Cell membrane</location>
        <topology evidence="3">Multi-pass membrane protein</topology>
    </subcellularLocation>
</comment>
<comment type="similarity">
    <text evidence="3">Belongs to the acyltransferase 3 family.</text>
</comment>
<dbReference type="EC" id="2.3.1.-"/>
<dbReference type="EMBL" id="BX571857">
    <property type="protein sequence ID" value="CAG42619.1"/>
    <property type="molecule type" value="Genomic_DNA"/>
</dbReference>
<dbReference type="RefSeq" id="WP_001044230.1">
    <property type="nucleotide sequence ID" value="NC_002953.3"/>
</dbReference>
<dbReference type="SMR" id="Q6GAV2"/>
<dbReference type="KEGG" id="sas:SAS0844"/>
<dbReference type="HOGENOM" id="CLU_005679_11_2_9"/>
<dbReference type="GO" id="GO:0005886">
    <property type="term" value="C:plasma membrane"/>
    <property type="evidence" value="ECO:0007669"/>
    <property type="project" value="UniProtKB-SubCell"/>
</dbReference>
<dbReference type="GO" id="GO:0016747">
    <property type="term" value="F:acyltransferase activity, transferring groups other than amino-acyl groups"/>
    <property type="evidence" value="ECO:0007669"/>
    <property type="project" value="InterPro"/>
</dbReference>
<dbReference type="GO" id="GO:0009103">
    <property type="term" value="P:lipopolysaccharide biosynthetic process"/>
    <property type="evidence" value="ECO:0007669"/>
    <property type="project" value="TreeGrafter"/>
</dbReference>
<dbReference type="CDD" id="cd01840">
    <property type="entry name" value="SGNH_hydrolase_yrhL_like"/>
    <property type="match status" value="1"/>
</dbReference>
<dbReference type="FunFam" id="3.40.50.1110:FF:000006">
    <property type="entry name" value="O-acetyltransferase OatA"/>
    <property type="match status" value="1"/>
</dbReference>
<dbReference type="Gene3D" id="3.40.50.1110">
    <property type="entry name" value="SGNH hydrolase"/>
    <property type="match status" value="1"/>
</dbReference>
<dbReference type="InterPro" id="IPR002656">
    <property type="entry name" value="Acyl_transf_3_dom"/>
</dbReference>
<dbReference type="InterPro" id="IPR050879">
    <property type="entry name" value="Acyltransferase_3"/>
</dbReference>
<dbReference type="InterPro" id="IPR036514">
    <property type="entry name" value="SGNH_hydro_sf"/>
</dbReference>
<dbReference type="PANTHER" id="PTHR23028">
    <property type="entry name" value="ACETYLTRANSFERASE"/>
    <property type="match status" value="1"/>
</dbReference>
<dbReference type="PANTHER" id="PTHR23028:SF53">
    <property type="entry name" value="ACYL_TRANSF_3 DOMAIN-CONTAINING PROTEIN"/>
    <property type="match status" value="1"/>
</dbReference>
<dbReference type="Pfam" id="PF01757">
    <property type="entry name" value="Acyl_transf_3"/>
    <property type="match status" value="1"/>
</dbReference>
<dbReference type="SUPFAM" id="SSF52266">
    <property type="entry name" value="SGNH hydrolase"/>
    <property type="match status" value="1"/>
</dbReference>
<sequence length="604" mass="69414">MNKTKGFTKYKKMRYMPGLDGLRAIAVLGIIIYHLNKQWLTGGFLGVDTFFVISGYLITSLLLKEYDDTGIIKLKSFWIRRLKRLLPAVIVLLMVVGTATLLLKSDNIIRVKHDIIAAIFYVSNWWYIAKDVNYFEQFSFMPLKHLWSLAIEEQFYIFFPVILVTLLLTIKKRYKIGFIFWGVSIISLGLMMFIYSINGDHSRVYFGTDTRLQTLLLGVILAFLWPPFKLKNDPPKVVKYVIDSIGSLSFIVLILLFFIINDETNWIYDGGFYLISILTLFIIASVVHPSTWIAKIFSNPVLVFIGKRSYSLYLWHFAVISFVHSYYVDGQIPVYVYFIDISLTIIFAELSYRFIETPFRKEGIKALNWRPSYIPQFIRMAIVVTLLIPFMLILVGAFNKYGKDIIGEKANSFDTTIEDNYLMRIAPIDNIHIDGLVSEKKKESSDVYNNIKPLLIGDSVMVDIGESFKSSVPKSRIDGKVGRQLYQTLPLVKANYSQYKKSSDQVVLELGTNGDFTVKQLDDLLNQFGKAKIYLVNTRVPRIYEANVNRLLADAAKRKSNVTLIDWNKRSQGHSEYFAPDGVHLEYKGVLALKDEILKALKKK</sequence>
<gene>
    <name type="ordered locus">SAS0844</name>
</gene>
<feature type="chain" id="PRO_0000208095" description="Putative O-acetyltransferase SAS0844">
    <location>
        <begin position="1"/>
        <end position="604"/>
    </location>
</feature>
<feature type="transmembrane region" description="Helical" evidence="2">
    <location>
        <begin position="15"/>
        <end position="35"/>
    </location>
</feature>
<feature type="transmembrane region" description="Helical" evidence="2">
    <location>
        <begin position="43"/>
        <end position="63"/>
    </location>
</feature>
<feature type="transmembrane region" description="Helical" evidence="2">
    <location>
        <begin position="85"/>
        <end position="105"/>
    </location>
</feature>
<feature type="transmembrane region" description="Helical" evidence="2">
    <location>
        <begin position="150"/>
        <end position="170"/>
    </location>
</feature>
<feature type="transmembrane region" description="Helical" evidence="2">
    <location>
        <begin position="176"/>
        <end position="196"/>
    </location>
</feature>
<feature type="transmembrane region" description="Helical" evidence="2">
    <location>
        <begin position="212"/>
        <end position="232"/>
    </location>
</feature>
<feature type="transmembrane region" description="Helical" evidence="2">
    <location>
        <begin position="240"/>
        <end position="260"/>
    </location>
</feature>
<feature type="transmembrane region" description="Helical" evidence="2">
    <location>
        <begin position="267"/>
        <end position="287"/>
    </location>
</feature>
<feature type="transmembrane region" description="Helical" evidence="2">
    <location>
        <begin position="310"/>
        <end position="330"/>
    </location>
</feature>
<feature type="transmembrane region" description="Helical" evidence="2">
    <location>
        <begin position="332"/>
        <end position="352"/>
    </location>
</feature>
<feature type="transmembrane region" description="Helical" evidence="2">
    <location>
        <begin position="377"/>
        <end position="397"/>
    </location>
</feature>
<feature type="active site" evidence="1">
    <location>
        <position position="459"/>
    </location>
</feature>
<feature type="active site" evidence="1">
    <location>
        <position position="581"/>
    </location>
</feature>
<feature type="active site" evidence="1">
    <location>
        <position position="584"/>
    </location>
</feature>
<evidence type="ECO:0000250" key="1">
    <source>
        <dbReference type="UniProtKB" id="Q2FV54"/>
    </source>
</evidence>
<evidence type="ECO:0000255" key="2"/>
<evidence type="ECO:0000305" key="3"/>
<organism>
    <name type="scientific">Staphylococcus aureus (strain MSSA476)</name>
    <dbReference type="NCBI Taxonomy" id="282459"/>
    <lineage>
        <taxon>Bacteria</taxon>
        <taxon>Bacillati</taxon>
        <taxon>Bacillota</taxon>
        <taxon>Bacilli</taxon>
        <taxon>Bacillales</taxon>
        <taxon>Staphylococcaceae</taxon>
        <taxon>Staphylococcus</taxon>
    </lineage>
</organism>
<reference key="1">
    <citation type="journal article" date="2004" name="Proc. Natl. Acad. Sci. U.S.A.">
        <title>Complete genomes of two clinical Staphylococcus aureus strains: evidence for the rapid evolution of virulence and drug resistance.</title>
        <authorList>
            <person name="Holden M.T.G."/>
            <person name="Feil E.J."/>
            <person name="Lindsay J.A."/>
            <person name="Peacock S.J."/>
            <person name="Day N.P.J."/>
            <person name="Enright M.C."/>
            <person name="Foster T.J."/>
            <person name="Moore C.E."/>
            <person name="Hurst L."/>
            <person name="Atkin R."/>
            <person name="Barron A."/>
            <person name="Bason N."/>
            <person name="Bentley S.D."/>
            <person name="Chillingworth C."/>
            <person name="Chillingworth T."/>
            <person name="Churcher C."/>
            <person name="Clark L."/>
            <person name="Corton C."/>
            <person name="Cronin A."/>
            <person name="Doggett J."/>
            <person name="Dowd L."/>
            <person name="Feltwell T."/>
            <person name="Hance Z."/>
            <person name="Harris B."/>
            <person name="Hauser H."/>
            <person name="Holroyd S."/>
            <person name="Jagels K."/>
            <person name="James K.D."/>
            <person name="Lennard N."/>
            <person name="Line A."/>
            <person name="Mayes R."/>
            <person name="Moule S."/>
            <person name="Mungall K."/>
            <person name="Ormond D."/>
            <person name="Quail M.A."/>
            <person name="Rabbinowitsch E."/>
            <person name="Rutherford K.M."/>
            <person name="Sanders M."/>
            <person name="Sharp S."/>
            <person name="Simmonds M."/>
            <person name="Stevens K."/>
            <person name="Whitehead S."/>
            <person name="Barrell B.G."/>
            <person name="Spratt B.G."/>
            <person name="Parkhill J."/>
        </authorList>
    </citation>
    <scope>NUCLEOTIDE SEQUENCE [LARGE SCALE GENOMIC DNA]</scope>
    <source>
        <strain>MSSA476</strain>
    </source>
</reference>